<proteinExistence type="inferred from homology"/>
<protein>
    <recommendedName>
        <fullName evidence="1">Large ribosomal subunit protein bL9</fullName>
    </recommendedName>
    <alternativeName>
        <fullName evidence="2">50S ribosomal protein L9</fullName>
    </alternativeName>
</protein>
<dbReference type="EMBL" id="CP000724">
    <property type="protein sequence ID" value="ABR50835.1"/>
    <property type="molecule type" value="Genomic_DNA"/>
</dbReference>
<dbReference type="RefSeq" id="WP_012065720.1">
    <property type="nucleotide sequence ID" value="NC_009633.1"/>
</dbReference>
<dbReference type="SMR" id="A6TXB7"/>
<dbReference type="STRING" id="293826.Amet_4769"/>
<dbReference type="KEGG" id="amt:Amet_4769"/>
<dbReference type="eggNOG" id="COG0359">
    <property type="taxonomic scope" value="Bacteria"/>
</dbReference>
<dbReference type="HOGENOM" id="CLU_078938_3_0_9"/>
<dbReference type="OrthoDB" id="9788336at2"/>
<dbReference type="Proteomes" id="UP000001572">
    <property type="component" value="Chromosome"/>
</dbReference>
<dbReference type="GO" id="GO:1990904">
    <property type="term" value="C:ribonucleoprotein complex"/>
    <property type="evidence" value="ECO:0007669"/>
    <property type="project" value="UniProtKB-KW"/>
</dbReference>
<dbReference type="GO" id="GO:0005840">
    <property type="term" value="C:ribosome"/>
    <property type="evidence" value="ECO:0007669"/>
    <property type="project" value="UniProtKB-KW"/>
</dbReference>
<dbReference type="GO" id="GO:0019843">
    <property type="term" value="F:rRNA binding"/>
    <property type="evidence" value="ECO:0007669"/>
    <property type="project" value="UniProtKB-UniRule"/>
</dbReference>
<dbReference type="GO" id="GO:0003735">
    <property type="term" value="F:structural constituent of ribosome"/>
    <property type="evidence" value="ECO:0007669"/>
    <property type="project" value="InterPro"/>
</dbReference>
<dbReference type="GO" id="GO:0006412">
    <property type="term" value="P:translation"/>
    <property type="evidence" value="ECO:0007669"/>
    <property type="project" value="UniProtKB-UniRule"/>
</dbReference>
<dbReference type="FunFam" id="3.10.430.100:FF:000002">
    <property type="entry name" value="50S ribosomal protein L9"/>
    <property type="match status" value="1"/>
</dbReference>
<dbReference type="FunFam" id="3.40.5.10:FF:000002">
    <property type="entry name" value="50S ribosomal protein L9"/>
    <property type="match status" value="1"/>
</dbReference>
<dbReference type="Gene3D" id="3.10.430.100">
    <property type="entry name" value="Ribosomal protein L9, C-terminal domain"/>
    <property type="match status" value="1"/>
</dbReference>
<dbReference type="Gene3D" id="3.40.5.10">
    <property type="entry name" value="Ribosomal protein L9, N-terminal domain"/>
    <property type="match status" value="1"/>
</dbReference>
<dbReference type="HAMAP" id="MF_00503">
    <property type="entry name" value="Ribosomal_bL9"/>
    <property type="match status" value="1"/>
</dbReference>
<dbReference type="InterPro" id="IPR000244">
    <property type="entry name" value="Ribosomal_bL9"/>
</dbReference>
<dbReference type="InterPro" id="IPR009027">
    <property type="entry name" value="Ribosomal_bL9/RNase_H1_N"/>
</dbReference>
<dbReference type="InterPro" id="IPR020594">
    <property type="entry name" value="Ribosomal_bL9_bac/chp"/>
</dbReference>
<dbReference type="InterPro" id="IPR020069">
    <property type="entry name" value="Ribosomal_bL9_C"/>
</dbReference>
<dbReference type="InterPro" id="IPR036791">
    <property type="entry name" value="Ribosomal_bL9_C_sf"/>
</dbReference>
<dbReference type="InterPro" id="IPR020070">
    <property type="entry name" value="Ribosomal_bL9_N"/>
</dbReference>
<dbReference type="InterPro" id="IPR036935">
    <property type="entry name" value="Ribosomal_bL9_N_sf"/>
</dbReference>
<dbReference type="NCBIfam" id="TIGR00158">
    <property type="entry name" value="L9"/>
    <property type="match status" value="1"/>
</dbReference>
<dbReference type="PANTHER" id="PTHR21368">
    <property type="entry name" value="50S RIBOSOMAL PROTEIN L9"/>
    <property type="match status" value="1"/>
</dbReference>
<dbReference type="Pfam" id="PF03948">
    <property type="entry name" value="Ribosomal_L9_C"/>
    <property type="match status" value="1"/>
</dbReference>
<dbReference type="Pfam" id="PF01281">
    <property type="entry name" value="Ribosomal_L9_N"/>
    <property type="match status" value="1"/>
</dbReference>
<dbReference type="SUPFAM" id="SSF55658">
    <property type="entry name" value="L9 N-domain-like"/>
    <property type="match status" value="1"/>
</dbReference>
<dbReference type="SUPFAM" id="SSF55653">
    <property type="entry name" value="Ribosomal protein L9 C-domain"/>
    <property type="match status" value="1"/>
</dbReference>
<dbReference type="PROSITE" id="PS00651">
    <property type="entry name" value="RIBOSOMAL_L9"/>
    <property type="match status" value="1"/>
</dbReference>
<accession>A6TXB7</accession>
<organism>
    <name type="scientific">Alkaliphilus metalliredigens (strain QYMF)</name>
    <dbReference type="NCBI Taxonomy" id="293826"/>
    <lineage>
        <taxon>Bacteria</taxon>
        <taxon>Bacillati</taxon>
        <taxon>Bacillota</taxon>
        <taxon>Clostridia</taxon>
        <taxon>Peptostreptococcales</taxon>
        <taxon>Natronincolaceae</taxon>
        <taxon>Alkaliphilus</taxon>
    </lineage>
</organism>
<reference key="1">
    <citation type="journal article" date="2016" name="Genome Announc.">
        <title>Complete genome sequence of Alkaliphilus metalliredigens strain QYMF, an alkaliphilic and metal-reducing bacterium isolated from borax-contaminated leachate ponds.</title>
        <authorList>
            <person name="Hwang C."/>
            <person name="Copeland A."/>
            <person name="Lucas S."/>
            <person name="Lapidus A."/>
            <person name="Barry K."/>
            <person name="Detter J.C."/>
            <person name="Glavina Del Rio T."/>
            <person name="Hammon N."/>
            <person name="Israni S."/>
            <person name="Dalin E."/>
            <person name="Tice H."/>
            <person name="Pitluck S."/>
            <person name="Chertkov O."/>
            <person name="Brettin T."/>
            <person name="Bruce D."/>
            <person name="Han C."/>
            <person name="Schmutz J."/>
            <person name="Larimer F."/>
            <person name="Land M.L."/>
            <person name="Hauser L."/>
            <person name="Kyrpides N."/>
            <person name="Mikhailova N."/>
            <person name="Ye Q."/>
            <person name="Zhou J."/>
            <person name="Richardson P."/>
            <person name="Fields M.W."/>
        </authorList>
    </citation>
    <scope>NUCLEOTIDE SEQUENCE [LARGE SCALE GENOMIC DNA]</scope>
    <source>
        <strain>QYMF</strain>
    </source>
</reference>
<sequence length="149" mass="16438">MKVILLKDVKGLGDKGDVVNASDGYARNFLLPKKVAKEATEGSLQTLKEQKTAQKMKKDQEVDKAKELAERLSKVDVNIKAKAGEGGRLFGSVTSKDVIEKLQKQEGIKLDKRKLLLDEPIRELGSKWIDIKLHSGVVGKIKVTVTEEA</sequence>
<name>RL9_ALKMQ</name>
<feature type="chain" id="PRO_1000060502" description="Large ribosomal subunit protein bL9">
    <location>
        <begin position="1"/>
        <end position="149"/>
    </location>
</feature>
<comment type="function">
    <text evidence="1">Binds to the 23S rRNA.</text>
</comment>
<comment type="similarity">
    <text evidence="1">Belongs to the bacterial ribosomal protein bL9 family.</text>
</comment>
<keyword id="KW-1185">Reference proteome</keyword>
<keyword id="KW-0687">Ribonucleoprotein</keyword>
<keyword id="KW-0689">Ribosomal protein</keyword>
<keyword id="KW-0694">RNA-binding</keyword>
<keyword id="KW-0699">rRNA-binding</keyword>
<evidence type="ECO:0000255" key="1">
    <source>
        <dbReference type="HAMAP-Rule" id="MF_00503"/>
    </source>
</evidence>
<evidence type="ECO:0000305" key="2"/>
<gene>
    <name evidence="1" type="primary">rplI</name>
    <name type="ordered locus">Amet_4769</name>
</gene>